<gene>
    <name evidence="1" type="primary">glyA</name>
    <name type="ordered locus">Swol_2392</name>
</gene>
<protein>
    <recommendedName>
        <fullName evidence="1">Serine hydroxymethyltransferase</fullName>
        <shortName evidence="1">SHMT</shortName>
        <shortName evidence="1">Serine methylase</shortName>
        <ecNumber evidence="1">2.1.2.1</ecNumber>
    </recommendedName>
</protein>
<keyword id="KW-0028">Amino-acid biosynthesis</keyword>
<keyword id="KW-0963">Cytoplasm</keyword>
<keyword id="KW-0554">One-carbon metabolism</keyword>
<keyword id="KW-0663">Pyridoxal phosphate</keyword>
<keyword id="KW-1185">Reference proteome</keyword>
<keyword id="KW-0808">Transferase</keyword>
<dbReference type="EC" id="2.1.2.1" evidence="1"/>
<dbReference type="EMBL" id="CP000448">
    <property type="protein sequence ID" value="ABI69681.1"/>
    <property type="molecule type" value="Genomic_DNA"/>
</dbReference>
<dbReference type="RefSeq" id="WP_011641765.1">
    <property type="nucleotide sequence ID" value="NC_008346.1"/>
</dbReference>
<dbReference type="SMR" id="Q0AUC3"/>
<dbReference type="STRING" id="335541.Swol_2392"/>
<dbReference type="KEGG" id="swo:Swol_2392"/>
<dbReference type="eggNOG" id="COG0112">
    <property type="taxonomic scope" value="Bacteria"/>
</dbReference>
<dbReference type="HOGENOM" id="CLU_022477_2_1_9"/>
<dbReference type="UniPathway" id="UPA00193"/>
<dbReference type="UniPathway" id="UPA00288">
    <property type="reaction ID" value="UER01023"/>
</dbReference>
<dbReference type="Proteomes" id="UP000001968">
    <property type="component" value="Chromosome"/>
</dbReference>
<dbReference type="GO" id="GO:0005829">
    <property type="term" value="C:cytosol"/>
    <property type="evidence" value="ECO:0007669"/>
    <property type="project" value="TreeGrafter"/>
</dbReference>
<dbReference type="GO" id="GO:0004372">
    <property type="term" value="F:glycine hydroxymethyltransferase activity"/>
    <property type="evidence" value="ECO:0007669"/>
    <property type="project" value="UniProtKB-UniRule"/>
</dbReference>
<dbReference type="GO" id="GO:0030170">
    <property type="term" value="F:pyridoxal phosphate binding"/>
    <property type="evidence" value="ECO:0007669"/>
    <property type="project" value="UniProtKB-UniRule"/>
</dbReference>
<dbReference type="GO" id="GO:0019264">
    <property type="term" value="P:glycine biosynthetic process from serine"/>
    <property type="evidence" value="ECO:0007669"/>
    <property type="project" value="UniProtKB-UniRule"/>
</dbReference>
<dbReference type="GO" id="GO:0035999">
    <property type="term" value="P:tetrahydrofolate interconversion"/>
    <property type="evidence" value="ECO:0007669"/>
    <property type="project" value="UniProtKB-UniRule"/>
</dbReference>
<dbReference type="CDD" id="cd00378">
    <property type="entry name" value="SHMT"/>
    <property type="match status" value="1"/>
</dbReference>
<dbReference type="FunFam" id="3.40.640.10:FF:000001">
    <property type="entry name" value="Serine hydroxymethyltransferase"/>
    <property type="match status" value="1"/>
</dbReference>
<dbReference type="FunFam" id="3.90.1150.10:FF:000003">
    <property type="entry name" value="Serine hydroxymethyltransferase"/>
    <property type="match status" value="1"/>
</dbReference>
<dbReference type="Gene3D" id="3.90.1150.10">
    <property type="entry name" value="Aspartate Aminotransferase, domain 1"/>
    <property type="match status" value="1"/>
</dbReference>
<dbReference type="Gene3D" id="3.40.640.10">
    <property type="entry name" value="Type I PLP-dependent aspartate aminotransferase-like (Major domain)"/>
    <property type="match status" value="1"/>
</dbReference>
<dbReference type="HAMAP" id="MF_00051">
    <property type="entry name" value="SHMT"/>
    <property type="match status" value="1"/>
</dbReference>
<dbReference type="InterPro" id="IPR015424">
    <property type="entry name" value="PyrdxlP-dep_Trfase"/>
</dbReference>
<dbReference type="InterPro" id="IPR015421">
    <property type="entry name" value="PyrdxlP-dep_Trfase_major"/>
</dbReference>
<dbReference type="InterPro" id="IPR015422">
    <property type="entry name" value="PyrdxlP-dep_Trfase_small"/>
</dbReference>
<dbReference type="InterPro" id="IPR001085">
    <property type="entry name" value="Ser_HO-MeTrfase"/>
</dbReference>
<dbReference type="InterPro" id="IPR049943">
    <property type="entry name" value="Ser_HO-MeTrfase-like"/>
</dbReference>
<dbReference type="InterPro" id="IPR019798">
    <property type="entry name" value="Ser_HO-MeTrfase_PLP_BS"/>
</dbReference>
<dbReference type="InterPro" id="IPR039429">
    <property type="entry name" value="SHMT-like_dom"/>
</dbReference>
<dbReference type="NCBIfam" id="NF000586">
    <property type="entry name" value="PRK00011.1"/>
    <property type="match status" value="1"/>
</dbReference>
<dbReference type="PANTHER" id="PTHR11680">
    <property type="entry name" value="SERINE HYDROXYMETHYLTRANSFERASE"/>
    <property type="match status" value="1"/>
</dbReference>
<dbReference type="PANTHER" id="PTHR11680:SF35">
    <property type="entry name" value="SERINE HYDROXYMETHYLTRANSFERASE 1"/>
    <property type="match status" value="1"/>
</dbReference>
<dbReference type="Pfam" id="PF00464">
    <property type="entry name" value="SHMT"/>
    <property type="match status" value="1"/>
</dbReference>
<dbReference type="PIRSF" id="PIRSF000412">
    <property type="entry name" value="SHMT"/>
    <property type="match status" value="1"/>
</dbReference>
<dbReference type="SUPFAM" id="SSF53383">
    <property type="entry name" value="PLP-dependent transferases"/>
    <property type="match status" value="1"/>
</dbReference>
<dbReference type="PROSITE" id="PS00096">
    <property type="entry name" value="SHMT"/>
    <property type="match status" value="1"/>
</dbReference>
<comment type="function">
    <text evidence="1">Catalyzes the reversible interconversion of serine and glycine with tetrahydrofolate (THF) serving as the one-carbon carrier. This reaction serves as the major source of one-carbon groups required for the biosynthesis of purines, thymidylate, methionine, and other important biomolecules. Also exhibits THF-independent aldolase activity toward beta-hydroxyamino acids, producing glycine and aldehydes, via a retro-aldol mechanism.</text>
</comment>
<comment type="catalytic activity">
    <reaction evidence="1">
        <text>(6R)-5,10-methylene-5,6,7,8-tetrahydrofolate + glycine + H2O = (6S)-5,6,7,8-tetrahydrofolate + L-serine</text>
        <dbReference type="Rhea" id="RHEA:15481"/>
        <dbReference type="ChEBI" id="CHEBI:15377"/>
        <dbReference type="ChEBI" id="CHEBI:15636"/>
        <dbReference type="ChEBI" id="CHEBI:33384"/>
        <dbReference type="ChEBI" id="CHEBI:57305"/>
        <dbReference type="ChEBI" id="CHEBI:57453"/>
        <dbReference type="EC" id="2.1.2.1"/>
    </reaction>
</comment>
<comment type="cofactor">
    <cofactor evidence="1">
        <name>pyridoxal 5'-phosphate</name>
        <dbReference type="ChEBI" id="CHEBI:597326"/>
    </cofactor>
</comment>
<comment type="pathway">
    <text evidence="1">One-carbon metabolism; tetrahydrofolate interconversion.</text>
</comment>
<comment type="pathway">
    <text evidence="1">Amino-acid biosynthesis; glycine biosynthesis; glycine from L-serine: step 1/1.</text>
</comment>
<comment type="subunit">
    <text evidence="1">Homodimer.</text>
</comment>
<comment type="subcellular location">
    <subcellularLocation>
        <location evidence="1">Cytoplasm</location>
    </subcellularLocation>
</comment>
<comment type="similarity">
    <text evidence="1">Belongs to the SHMT family.</text>
</comment>
<organism>
    <name type="scientific">Syntrophomonas wolfei subsp. wolfei (strain DSM 2245B / Goettingen)</name>
    <dbReference type="NCBI Taxonomy" id="335541"/>
    <lineage>
        <taxon>Bacteria</taxon>
        <taxon>Bacillati</taxon>
        <taxon>Bacillota</taxon>
        <taxon>Clostridia</taxon>
        <taxon>Eubacteriales</taxon>
        <taxon>Syntrophomonadaceae</taxon>
        <taxon>Syntrophomonas</taxon>
    </lineage>
</organism>
<accession>Q0AUC3</accession>
<evidence type="ECO:0000255" key="1">
    <source>
        <dbReference type="HAMAP-Rule" id="MF_00051"/>
    </source>
</evidence>
<proteinExistence type="inferred from homology"/>
<sequence length="415" mass="45504">MDYIQEYVKPVDPEVAEAIEKEEARQNNKLELIASENFVSRAVMAAQGSVMTNKYAEGLPGARYYGGCEYVDIVEELARDRVKEIFGAEHANVQPHSGAQANTAVYFAALQPGQTIMGMNLNHGGHLTHGSKVNISGKYFNIVDYGVNRDTERIDYEELREIALKARPQMIVAGASAYPRILDFKKFREIADEAGALLFVDMAHIAGLVAAGLHPSPVPYADFVSSTTHKTLRGPRGGFILCRQEWANKIDKAVFPGIQGGPLMHVIAAKAVCFKEALTPEFKAYQQDIVNNAAILAKALMEQGLRVVSGGTDNHLMLVDVRPKGLNGRDAEAILESINITVNKNAIPFDPEKPTVTSGIRVGTPAVTSRALKGDDMRELARAITLVLDKHDSEEVKEEARRIVKALCDKYPLYT</sequence>
<reference key="1">
    <citation type="journal article" date="2010" name="Environ. Microbiol.">
        <title>The genome of Syntrophomonas wolfei: new insights into syntrophic metabolism and biohydrogen production.</title>
        <authorList>
            <person name="Sieber J.R."/>
            <person name="Sims D.R."/>
            <person name="Han C."/>
            <person name="Kim E."/>
            <person name="Lykidis A."/>
            <person name="Lapidus A.L."/>
            <person name="McDonnald E."/>
            <person name="Rohlin L."/>
            <person name="Culley D.E."/>
            <person name="Gunsalus R."/>
            <person name="McInerney M.J."/>
        </authorList>
    </citation>
    <scope>NUCLEOTIDE SEQUENCE [LARGE SCALE GENOMIC DNA]</scope>
    <source>
        <strain>DSM 2245B / Goettingen</strain>
    </source>
</reference>
<name>GLYA_SYNWW</name>
<feature type="chain" id="PRO_1000071134" description="Serine hydroxymethyltransferase">
    <location>
        <begin position="1"/>
        <end position="415"/>
    </location>
</feature>
<feature type="binding site" evidence="1">
    <location>
        <position position="121"/>
    </location>
    <ligand>
        <name>(6S)-5,6,7,8-tetrahydrofolate</name>
        <dbReference type="ChEBI" id="CHEBI:57453"/>
    </ligand>
</feature>
<feature type="binding site" evidence="1">
    <location>
        <begin position="125"/>
        <end position="127"/>
    </location>
    <ligand>
        <name>(6S)-5,6,7,8-tetrahydrofolate</name>
        <dbReference type="ChEBI" id="CHEBI:57453"/>
    </ligand>
</feature>
<feature type="site" description="Plays an important role in substrate specificity" evidence="1">
    <location>
        <position position="229"/>
    </location>
</feature>
<feature type="modified residue" description="N6-(pyridoxal phosphate)lysine" evidence="1">
    <location>
        <position position="230"/>
    </location>
</feature>